<comment type="cofactor">
    <cofactor evidence="1">
        <name>FAD</name>
        <dbReference type="ChEBI" id="CHEBI:57692"/>
    </cofactor>
    <text evidence="1">Binds 1 FAD per subunit in a bicovalent manner.</text>
</comment>
<comment type="subcellular location">
    <subcellularLocation>
        <location evidence="6">Secreted</location>
        <location evidence="6">Cell wall</location>
    </subcellularLocation>
</comment>
<comment type="tissue specificity">
    <text evidence="6">Accumulates in cell walls of etiolated hypocotyls.</text>
</comment>
<comment type="induction">
    <text evidence="5">By jasmonic acid (e.g. 12-oxo-phytodienoic acid OPDA).</text>
</comment>
<comment type="PTM">
    <text evidence="1">The FAD cofactor is bound via a bicovalent 6-S-cysteinyl, 8alpha-N1-histidyl FAD linkage.</text>
</comment>
<comment type="similarity">
    <text evidence="9">Belongs to the oxygen-dependent FAD-linked oxidoreductase family.</text>
</comment>
<comment type="sequence caution" evidence="9">
    <conflict type="erroneous initiation">
        <sequence resource="EMBL-CDS" id="BAD93938"/>
    </conflict>
    <text>Truncated N-terminus.</text>
</comment>
<sequence>MRELFMYLFLLFLVLCVKSVYSTPTREQFQNCLSTKQFNSTLKNPINLTTHTLDSRVHTDFSESSSPNSSFLNLNFTSLKPILIVKPKSESEIKQSILCSRKLGVQVRTMSGGHDYEGLSYLSLSPFIIVDLVNLRSISINLTDETAWIQSGATLGEVYYKIAKTSKIHAFAAGICPSVGVGGHISGGGFGTIMRKYGLASDNVVDARLMDVNGKTLDRKTMGEDLFWALRGGGAASFGVVLSWKVKLARVPEKVTCFISQHPMGPSMNKLVHRWQSIGSELDEDLFIRVIIDNSLEGNQRKVKSTFQTLFLGGIDRLIPLMNQKFPELGLRSQDCSEMSWIESIMFFNWRSGQPLEILLNRDLRFEDQYFKAKSDYVQKPVPENVFEEVTKRFLEQDTPLMIFEPLGGKISKISETESPYPHRRGNLYNIQYMVKWKVNEVEEMNKHVRWMRSLHDYMTPYVSKSPRGAYLNYRDLDLGSTKGINTSFEDARKWGETYFKGNFKRLGLVKGKIDPTNFFRNEQSIPPLF</sequence>
<reference key="1">
    <citation type="journal article" date="1999" name="Nature">
        <title>Sequence and analysis of chromosome 4 of the plant Arabidopsis thaliana.</title>
        <authorList>
            <person name="Mayer K.F.X."/>
            <person name="Schueller C."/>
            <person name="Wambutt R."/>
            <person name="Murphy G."/>
            <person name="Volckaert G."/>
            <person name="Pohl T."/>
            <person name="Duesterhoeft A."/>
            <person name="Stiekema W."/>
            <person name="Entian K.-D."/>
            <person name="Terryn N."/>
            <person name="Harris B."/>
            <person name="Ansorge W."/>
            <person name="Brandt P."/>
            <person name="Grivell L.A."/>
            <person name="Rieger M."/>
            <person name="Weichselgartner M."/>
            <person name="de Simone V."/>
            <person name="Obermaier B."/>
            <person name="Mache R."/>
            <person name="Mueller M."/>
            <person name="Kreis M."/>
            <person name="Delseny M."/>
            <person name="Puigdomenech P."/>
            <person name="Watson M."/>
            <person name="Schmidtheini T."/>
            <person name="Reichert B."/>
            <person name="Portetelle D."/>
            <person name="Perez-Alonso M."/>
            <person name="Boutry M."/>
            <person name="Bancroft I."/>
            <person name="Vos P."/>
            <person name="Hoheisel J."/>
            <person name="Zimmermann W."/>
            <person name="Wedler H."/>
            <person name="Ridley P."/>
            <person name="Langham S.-A."/>
            <person name="McCullagh B."/>
            <person name="Bilham L."/>
            <person name="Robben J."/>
            <person name="van der Schueren J."/>
            <person name="Grymonprez B."/>
            <person name="Chuang Y.-J."/>
            <person name="Vandenbussche F."/>
            <person name="Braeken M."/>
            <person name="Weltjens I."/>
            <person name="Voet M."/>
            <person name="Bastiaens I."/>
            <person name="Aert R."/>
            <person name="Defoor E."/>
            <person name="Weitzenegger T."/>
            <person name="Bothe G."/>
            <person name="Ramsperger U."/>
            <person name="Hilbert H."/>
            <person name="Braun M."/>
            <person name="Holzer E."/>
            <person name="Brandt A."/>
            <person name="Peters S."/>
            <person name="van Staveren M."/>
            <person name="Dirkse W."/>
            <person name="Mooijman P."/>
            <person name="Klein Lankhorst R."/>
            <person name="Rose M."/>
            <person name="Hauf J."/>
            <person name="Koetter P."/>
            <person name="Berneiser S."/>
            <person name="Hempel S."/>
            <person name="Feldpausch M."/>
            <person name="Lamberth S."/>
            <person name="Van den Daele H."/>
            <person name="De Keyser A."/>
            <person name="Buysshaert C."/>
            <person name="Gielen J."/>
            <person name="Villarroel R."/>
            <person name="De Clercq R."/>
            <person name="van Montagu M."/>
            <person name="Rogers J."/>
            <person name="Cronin A."/>
            <person name="Quail M.A."/>
            <person name="Bray-Allen S."/>
            <person name="Clark L."/>
            <person name="Doggett J."/>
            <person name="Hall S."/>
            <person name="Kay M."/>
            <person name="Lennard N."/>
            <person name="McLay K."/>
            <person name="Mayes R."/>
            <person name="Pettett A."/>
            <person name="Rajandream M.A."/>
            <person name="Lyne M."/>
            <person name="Benes V."/>
            <person name="Rechmann S."/>
            <person name="Borkova D."/>
            <person name="Bloecker H."/>
            <person name="Scharfe M."/>
            <person name="Grimm M."/>
            <person name="Loehnert T.-H."/>
            <person name="Dose S."/>
            <person name="de Haan M."/>
            <person name="Maarse A.C."/>
            <person name="Schaefer M."/>
            <person name="Mueller-Auer S."/>
            <person name="Gabel C."/>
            <person name="Fuchs M."/>
            <person name="Fartmann B."/>
            <person name="Granderath K."/>
            <person name="Dauner D."/>
            <person name="Herzl A."/>
            <person name="Neumann S."/>
            <person name="Argiriou A."/>
            <person name="Vitale D."/>
            <person name="Liguori R."/>
            <person name="Piravandi E."/>
            <person name="Massenet O."/>
            <person name="Quigley F."/>
            <person name="Clabauld G."/>
            <person name="Muendlein A."/>
            <person name="Felber R."/>
            <person name="Schnabl S."/>
            <person name="Hiller R."/>
            <person name="Schmidt W."/>
            <person name="Lecharny A."/>
            <person name="Aubourg S."/>
            <person name="Chefdor F."/>
            <person name="Cooke R."/>
            <person name="Berger C."/>
            <person name="Monfort A."/>
            <person name="Casacuberta E."/>
            <person name="Gibbons T."/>
            <person name="Weber N."/>
            <person name="Vandenbol M."/>
            <person name="Bargues M."/>
            <person name="Terol J."/>
            <person name="Torres A."/>
            <person name="Perez-Perez A."/>
            <person name="Purnelle B."/>
            <person name="Bent E."/>
            <person name="Johnson S."/>
            <person name="Tacon D."/>
            <person name="Jesse T."/>
            <person name="Heijnen L."/>
            <person name="Schwarz S."/>
            <person name="Scholler P."/>
            <person name="Heber S."/>
            <person name="Francs P."/>
            <person name="Bielke C."/>
            <person name="Frishman D."/>
            <person name="Haase D."/>
            <person name="Lemcke K."/>
            <person name="Mewes H.-W."/>
            <person name="Stocker S."/>
            <person name="Zaccaria P."/>
            <person name="Bevan M."/>
            <person name="Wilson R.K."/>
            <person name="de la Bastide M."/>
            <person name="Habermann K."/>
            <person name="Parnell L."/>
            <person name="Dedhia N."/>
            <person name="Gnoj L."/>
            <person name="Schutz K."/>
            <person name="Huang E."/>
            <person name="Spiegel L."/>
            <person name="Sekhon M."/>
            <person name="Murray J."/>
            <person name="Sheet P."/>
            <person name="Cordes M."/>
            <person name="Abu-Threideh J."/>
            <person name="Stoneking T."/>
            <person name="Kalicki J."/>
            <person name="Graves T."/>
            <person name="Harmon G."/>
            <person name="Edwards J."/>
            <person name="Latreille P."/>
            <person name="Courtney L."/>
            <person name="Cloud J."/>
            <person name="Abbott A."/>
            <person name="Scott K."/>
            <person name="Johnson D."/>
            <person name="Minx P."/>
            <person name="Bentley D."/>
            <person name="Fulton B."/>
            <person name="Miller N."/>
            <person name="Greco T."/>
            <person name="Kemp K."/>
            <person name="Kramer J."/>
            <person name="Fulton L."/>
            <person name="Mardis E."/>
            <person name="Dante M."/>
            <person name="Pepin K."/>
            <person name="Hillier L.W."/>
            <person name="Nelson J."/>
            <person name="Spieth J."/>
            <person name="Ryan E."/>
            <person name="Andrews S."/>
            <person name="Geisel C."/>
            <person name="Layman D."/>
            <person name="Du H."/>
            <person name="Ali J."/>
            <person name="Berghoff A."/>
            <person name="Jones K."/>
            <person name="Drone K."/>
            <person name="Cotton M."/>
            <person name="Joshu C."/>
            <person name="Antonoiu B."/>
            <person name="Zidanic M."/>
            <person name="Strong C."/>
            <person name="Sun H."/>
            <person name="Lamar B."/>
            <person name="Yordan C."/>
            <person name="Ma P."/>
            <person name="Zhong J."/>
            <person name="Preston R."/>
            <person name="Vil D."/>
            <person name="Shekher M."/>
            <person name="Matero A."/>
            <person name="Shah R."/>
            <person name="Swaby I.K."/>
            <person name="O'Shaughnessy A."/>
            <person name="Rodriguez M."/>
            <person name="Hoffman J."/>
            <person name="Till S."/>
            <person name="Granat S."/>
            <person name="Shohdy N."/>
            <person name="Hasegawa A."/>
            <person name="Hameed A."/>
            <person name="Lodhi M."/>
            <person name="Johnson A."/>
            <person name="Chen E."/>
            <person name="Marra M.A."/>
            <person name="Martienssen R."/>
            <person name="McCombie W.R."/>
        </authorList>
    </citation>
    <scope>NUCLEOTIDE SEQUENCE [LARGE SCALE GENOMIC DNA]</scope>
    <source>
        <strain>cv. Columbia</strain>
    </source>
</reference>
<reference key="2">
    <citation type="journal article" date="2017" name="Plant J.">
        <title>Araport11: a complete reannotation of the Arabidopsis thaliana reference genome.</title>
        <authorList>
            <person name="Cheng C.Y."/>
            <person name="Krishnakumar V."/>
            <person name="Chan A.P."/>
            <person name="Thibaud-Nissen F."/>
            <person name="Schobel S."/>
            <person name="Town C.D."/>
        </authorList>
    </citation>
    <scope>GENOME REANNOTATION</scope>
    <source>
        <strain>cv. Columbia</strain>
    </source>
</reference>
<reference key="3">
    <citation type="journal article" date="2003" name="Science">
        <title>Empirical analysis of transcriptional activity in the Arabidopsis genome.</title>
        <authorList>
            <person name="Yamada K."/>
            <person name="Lim J."/>
            <person name="Dale J.M."/>
            <person name="Chen H."/>
            <person name="Shinn P."/>
            <person name="Palm C.J."/>
            <person name="Southwick A.M."/>
            <person name="Wu H.C."/>
            <person name="Kim C.J."/>
            <person name="Nguyen M."/>
            <person name="Pham P.K."/>
            <person name="Cheuk R.F."/>
            <person name="Karlin-Newmann G."/>
            <person name="Liu S.X."/>
            <person name="Lam B."/>
            <person name="Sakano H."/>
            <person name="Wu T."/>
            <person name="Yu G."/>
            <person name="Miranda M."/>
            <person name="Quach H.L."/>
            <person name="Tripp M."/>
            <person name="Chang C.H."/>
            <person name="Lee J.M."/>
            <person name="Toriumi M.J."/>
            <person name="Chan M.M."/>
            <person name="Tang C.C."/>
            <person name="Onodera C.S."/>
            <person name="Deng J.M."/>
            <person name="Akiyama K."/>
            <person name="Ansari Y."/>
            <person name="Arakawa T."/>
            <person name="Banh J."/>
            <person name="Banno F."/>
            <person name="Bowser L."/>
            <person name="Brooks S.Y."/>
            <person name="Carninci P."/>
            <person name="Chao Q."/>
            <person name="Choy N."/>
            <person name="Enju A."/>
            <person name="Goldsmith A.D."/>
            <person name="Gurjal M."/>
            <person name="Hansen N.F."/>
            <person name="Hayashizaki Y."/>
            <person name="Johnson-Hopson C."/>
            <person name="Hsuan V.W."/>
            <person name="Iida K."/>
            <person name="Karnes M."/>
            <person name="Khan S."/>
            <person name="Koesema E."/>
            <person name="Ishida J."/>
            <person name="Jiang P.X."/>
            <person name="Jones T."/>
            <person name="Kawai J."/>
            <person name="Kamiya A."/>
            <person name="Meyers C."/>
            <person name="Nakajima M."/>
            <person name="Narusaka M."/>
            <person name="Seki M."/>
            <person name="Sakurai T."/>
            <person name="Satou M."/>
            <person name="Tamse R."/>
            <person name="Vaysberg M."/>
            <person name="Wallender E.K."/>
            <person name="Wong C."/>
            <person name="Yamamura Y."/>
            <person name="Yuan S."/>
            <person name="Shinozaki K."/>
            <person name="Davis R.W."/>
            <person name="Theologis A."/>
            <person name="Ecker J.R."/>
        </authorList>
    </citation>
    <scope>NUCLEOTIDE SEQUENCE [LARGE SCALE MRNA]</scope>
    <source>
        <strain>cv. Columbia</strain>
    </source>
</reference>
<reference key="4">
    <citation type="submission" date="2005-03" db="EMBL/GenBank/DDBJ databases">
        <title>Large-scale analysis of RIKEN Arabidopsis full-length (RAFL) cDNAs.</title>
        <authorList>
            <person name="Totoki Y."/>
            <person name="Seki M."/>
            <person name="Ishida J."/>
            <person name="Nakajima M."/>
            <person name="Enju A."/>
            <person name="Kamiya A."/>
            <person name="Narusaka M."/>
            <person name="Shin-i T."/>
            <person name="Nakagawa M."/>
            <person name="Sakamoto N."/>
            <person name="Oishi K."/>
            <person name="Kohara Y."/>
            <person name="Kobayashi M."/>
            <person name="Toyoda A."/>
            <person name="Sakaki Y."/>
            <person name="Sakurai T."/>
            <person name="Iida K."/>
            <person name="Akiyama K."/>
            <person name="Satou M."/>
            <person name="Toyoda T."/>
            <person name="Konagaya A."/>
            <person name="Carninci P."/>
            <person name="Kawai J."/>
            <person name="Hayashizaki Y."/>
            <person name="Shinozaki K."/>
        </authorList>
    </citation>
    <scope>NUCLEOTIDE SEQUENCE [LARGE SCALE MRNA] OF 397-530</scope>
    <source>
        <strain>cv. Columbia</strain>
    </source>
</reference>
<reference key="5">
    <citation type="journal article" date="2008" name="BMC Plant Biol.">
        <title>A new picture of cell wall protein dynamics in elongating cells of Arabidopsis thaliana: confirmed actors and newcomers.</title>
        <authorList>
            <person name="Irshad M."/>
            <person name="Canut H."/>
            <person name="Borderies G."/>
            <person name="Pont-Lezica R."/>
            <person name="Jamet E."/>
        </authorList>
    </citation>
    <scope>SUBCELLULAR LOCATION</scope>
    <scope>TISSUE SPECIFICITY</scope>
</reference>
<reference key="6">
    <citation type="journal article" date="2008" name="Plant Physiol.">
        <title>Induction of the Arabidopsis PHO1;H10 gene by 12-oxo-phytodienoic acid but not jasmonic acid via a CORONATINE INSENSITIVE1-dependent pathway.</title>
        <authorList>
            <person name="Ribot C."/>
            <person name="Zimmerli C."/>
            <person name="Farmer E.E."/>
            <person name="Reymond P."/>
            <person name="Poirier Y."/>
        </authorList>
    </citation>
    <scope>INDUCTION BY JASMONIC ACID</scope>
</reference>
<reference key="7">
    <citation type="journal article" date="2015" name="J. Biol. Chem.">
        <title>Oxidation of monolignols by members of the berberine bridge enzyme family suggests a role in plant cell wall metabolism.</title>
        <authorList>
            <person name="Daniel B."/>
            <person name="Pavkov-Keller T."/>
            <person name="Steiner B."/>
            <person name="Dordic A."/>
            <person name="Gutmann A."/>
            <person name="Nidetzky B."/>
            <person name="Sensen C.W."/>
            <person name="van der Graaff E."/>
            <person name="Wallner S."/>
            <person name="Gruber K."/>
            <person name="Macheroux P."/>
        </authorList>
    </citation>
    <scope>GENE FAMILY</scope>
    <scope>NOMENCLATURE</scope>
</reference>
<evidence type="ECO:0000250" key="1">
    <source>
        <dbReference type="UniProtKB" id="O64743"/>
    </source>
</evidence>
<evidence type="ECO:0000255" key="2"/>
<evidence type="ECO:0000255" key="3">
    <source>
        <dbReference type="PROSITE-ProRule" id="PRU00498"/>
    </source>
</evidence>
<evidence type="ECO:0000255" key="4">
    <source>
        <dbReference type="PROSITE-ProRule" id="PRU00718"/>
    </source>
</evidence>
<evidence type="ECO:0000269" key="5">
    <source>
    </source>
</evidence>
<evidence type="ECO:0000269" key="6">
    <source>
    </source>
</evidence>
<evidence type="ECO:0000303" key="7">
    <source>
    </source>
</evidence>
<evidence type="ECO:0000303" key="8">
    <source>
    </source>
</evidence>
<evidence type="ECO:0000305" key="9"/>
<evidence type="ECO:0000312" key="10">
    <source>
        <dbReference type="Araport" id="AT4G20860"/>
    </source>
</evidence>
<evidence type="ECO:0000312" key="11">
    <source>
        <dbReference type="EMBL" id="CAB45881.1"/>
    </source>
</evidence>
<gene>
    <name evidence="7" type="primary">FAD-OXR</name>
    <name evidence="10" type="ordered locus">At4g20860</name>
    <name evidence="11" type="ORF">T13K14.20</name>
</gene>
<dbReference type="EC" id="1.1.1.-" evidence="1"/>
<dbReference type="EMBL" id="AL080282">
    <property type="protein sequence ID" value="CAB45881.1"/>
    <property type="molecule type" value="Genomic_DNA"/>
</dbReference>
<dbReference type="EMBL" id="AL161553">
    <property type="protein sequence ID" value="CAB79086.1"/>
    <property type="molecule type" value="Genomic_DNA"/>
</dbReference>
<dbReference type="EMBL" id="CP002687">
    <property type="protein sequence ID" value="AEE84369.1"/>
    <property type="molecule type" value="Genomic_DNA"/>
</dbReference>
<dbReference type="EMBL" id="AF367269">
    <property type="protein sequence ID" value="AAK56258.1"/>
    <property type="molecule type" value="mRNA"/>
</dbReference>
<dbReference type="EMBL" id="AY133616">
    <property type="protein sequence ID" value="AAM91446.1"/>
    <property type="molecule type" value="mRNA"/>
</dbReference>
<dbReference type="EMBL" id="AK221267">
    <property type="protein sequence ID" value="BAD93938.1"/>
    <property type="status" value="ALT_INIT"/>
    <property type="molecule type" value="mRNA"/>
</dbReference>
<dbReference type="PIR" id="T10628">
    <property type="entry name" value="T10628"/>
</dbReference>
<dbReference type="RefSeq" id="NP_193818.1">
    <property type="nucleotide sequence ID" value="NM_118204.2"/>
</dbReference>
<dbReference type="SMR" id="Q9SUC6"/>
<dbReference type="FunCoup" id="Q9SUC6">
    <property type="interactions" value="14"/>
</dbReference>
<dbReference type="STRING" id="3702.Q9SUC6"/>
<dbReference type="GlyCosmos" id="Q9SUC6">
    <property type="glycosylation" value="6 sites, No reported glycans"/>
</dbReference>
<dbReference type="GlyGen" id="Q9SUC6">
    <property type="glycosylation" value="6 sites"/>
</dbReference>
<dbReference type="PaxDb" id="3702-AT4G20860.1"/>
<dbReference type="ProteomicsDB" id="240848"/>
<dbReference type="EnsemblPlants" id="AT4G20860.1">
    <property type="protein sequence ID" value="AT4G20860.1"/>
    <property type="gene ID" value="AT4G20860"/>
</dbReference>
<dbReference type="GeneID" id="827834"/>
<dbReference type="Gramene" id="AT4G20860.1">
    <property type="protein sequence ID" value="AT4G20860.1"/>
    <property type="gene ID" value="AT4G20860"/>
</dbReference>
<dbReference type="KEGG" id="ath:AT4G20860"/>
<dbReference type="Araport" id="AT4G20860"/>
<dbReference type="TAIR" id="AT4G20860">
    <property type="gene designation" value="ATBBE22"/>
</dbReference>
<dbReference type="eggNOG" id="ENOG502QVGN">
    <property type="taxonomic scope" value="Eukaryota"/>
</dbReference>
<dbReference type="HOGENOM" id="CLU_018354_6_0_1"/>
<dbReference type="InParanoid" id="Q9SUC6"/>
<dbReference type="OMA" id="MVKWKVN"/>
<dbReference type="PhylomeDB" id="Q9SUC6"/>
<dbReference type="BioCyc" id="ARA:AT4G20860-MONOMER"/>
<dbReference type="PRO" id="PR:Q9SUC6"/>
<dbReference type="Proteomes" id="UP000006548">
    <property type="component" value="Chromosome 4"/>
</dbReference>
<dbReference type="ExpressionAtlas" id="Q9SUC6">
    <property type="expression patterns" value="baseline and differential"/>
</dbReference>
<dbReference type="GO" id="GO:0005576">
    <property type="term" value="C:extracellular region"/>
    <property type="evidence" value="ECO:0007669"/>
    <property type="project" value="UniProtKB-KW"/>
</dbReference>
<dbReference type="GO" id="GO:0009505">
    <property type="term" value="C:plant-type cell wall"/>
    <property type="evidence" value="ECO:0000314"/>
    <property type="project" value="UniProtKB"/>
</dbReference>
<dbReference type="GO" id="GO:0071949">
    <property type="term" value="F:FAD binding"/>
    <property type="evidence" value="ECO:0007669"/>
    <property type="project" value="InterPro"/>
</dbReference>
<dbReference type="GO" id="GO:0016491">
    <property type="term" value="F:oxidoreductase activity"/>
    <property type="evidence" value="ECO:0007669"/>
    <property type="project" value="UniProtKB-KW"/>
</dbReference>
<dbReference type="GO" id="GO:0071456">
    <property type="term" value="P:cellular response to hypoxia"/>
    <property type="evidence" value="ECO:0007007"/>
    <property type="project" value="TAIR"/>
</dbReference>
<dbReference type="GO" id="GO:0010729">
    <property type="term" value="P:positive regulation of hydrogen peroxide biosynthetic process"/>
    <property type="evidence" value="ECO:0000315"/>
    <property type="project" value="TAIR"/>
</dbReference>
<dbReference type="GO" id="GO:0009753">
    <property type="term" value="P:response to jasmonic acid"/>
    <property type="evidence" value="ECO:0000270"/>
    <property type="project" value="UniProtKB"/>
</dbReference>
<dbReference type="Gene3D" id="3.30.465.10">
    <property type="match status" value="1"/>
</dbReference>
<dbReference type="Gene3D" id="3.40.462.20">
    <property type="match status" value="1"/>
</dbReference>
<dbReference type="Gene3D" id="3.30.43.10">
    <property type="entry name" value="Uridine Diphospho-n-acetylenolpyruvylglucosamine Reductase, domain 2"/>
    <property type="match status" value="1"/>
</dbReference>
<dbReference type="InterPro" id="IPR012951">
    <property type="entry name" value="BBE"/>
</dbReference>
<dbReference type="InterPro" id="IPR016166">
    <property type="entry name" value="FAD-bd_PCMH"/>
</dbReference>
<dbReference type="InterPro" id="IPR036318">
    <property type="entry name" value="FAD-bd_PCMH-like_sf"/>
</dbReference>
<dbReference type="InterPro" id="IPR016167">
    <property type="entry name" value="FAD-bd_PCMH_sub1"/>
</dbReference>
<dbReference type="InterPro" id="IPR016169">
    <property type="entry name" value="FAD-bd_PCMH_sub2"/>
</dbReference>
<dbReference type="InterPro" id="IPR006094">
    <property type="entry name" value="Oxid_FAD_bind_N"/>
</dbReference>
<dbReference type="InterPro" id="IPR006093">
    <property type="entry name" value="Oxy_OxRdtase_FAD_BS"/>
</dbReference>
<dbReference type="PANTHER" id="PTHR32448">
    <property type="entry name" value="OS08G0158400 PROTEIN"/>
    <property type="match status" value="1"/>
</dbReference>
<dbReference type="Pfam" id="PF08031">
    <property type="entry name" value="BBE"/>
    <property type="match status" value="1"/>
</dbReference>
<dbReference type="Pfam" id="PF01565">
    <property type="entry name" value="FAD_binding_4"/>
    <property type="match status" value="1"/>
</dbReference>
<dbReference type="SUPFAM" id="SSF56176">
    <property type="entry name" value="FAD-binding/transporter-associated domain-like"/>
    <property type="match status" value="1"/>
</dbReference>
<dbReference type="PROSITE" id="PS51387">
    <property type="entry name" value="FAD_PCMH"/>
    <property type="match status" value="1"/>
</dbReference>
<dbReference type="PROSITE" id="PS00862">
    <property type="entry name" value="OX2_COVAL_FAD"/>
    <property type="match status" value="1"/>
</dbReference>
<accession>Q9SUC6</accession>
<accession>Q56YQ4</accession>
<accession>Q94KD7</accession>
<name>BBE22_ARATH</name>
<proteinExistence type="evidence at transcript level"/>
<organism>
    <name type="scientific">Arabidopsis thaliana</name>
    <name type="common">Mouse-ear cress</name>
    <dbReference type="NCBI Taxonomy" id="3702"/>
    <lineage>
        <taxon>Eukaryota</taxon>
        <taxon>Viridiplantae</taxon>
        <taxon>Streptophyta</taxon>
        <taxon>Embryophyta</taxon>
        <taxon>Tracheophyta</taxon>
        <taxon>Spermatophyta</taxon>
        <taxon>Magnoliopsida</taxon>
        <taxon>eudicotyledons</taxon>
        <taxon>Gunneridae</taxon>
        <taxon>Pentapetalae</taxon>
        <taxon>rosids</taxon>
        <taxon>malvids</taxon>
        <taxon>Brassicales</taxon>
        <taxon>Brassicaceae</taxon>
        <taxon>Camelineae</taxon>
        <taxon>Arabidopsis</taxon>
    </lineage>
</organism>
<feature type="signal peptide" evidence="2">
    <location>
        <begin position="1"/>
        <end position="22"/>
    </location>
</feature>
<feature type="chain" id="PRO_5008180478" description="Berberine bridge enzyme-like 22">
    <location>
        <begin position="23"/>
        <end position="530"/>
    </location>
</feature>
<feature type="domain" description="FAD-binding PCMH-type" evidence="4">
    <location>
        <begin position="77"/>
        <end position="251"/>
    </location>
</feature>
<feature type="glycosylation site" description="N-linked (GlcNAc...) asparagine" evidence="3">
    <location>
        <position position="39"/>
    </location>
</feature>
<feature type="glycosylation site" description="N-linked (GlcNAc...) asparagine" evidence="3">
    <location>
        <position position="47"/>
    </location>
</feature>
<feature type="glycosylation site" description="N-linked (GlcNAc...) asparagine" evidence="3">
    <location>
        <position position="68"/>
    </location>
</feature>
<feature type="glycosylation site" description="N-linked (GlcNAc...) asparagine" evidence="3">
    <location>
        <position position="75"/>
    </location>
</feature>
<feature type="glycosylation site" description="N-linked (GlcNAc...) asparagine" evidence="3">
    <location>
        <position position="141"/>
    </location>
</feature>
<feature type="glycosylation site" description="N-linked (GlcNAc...) asparagine" evidence="3">
    <location>
        <position position="486"/>
    </location>
</feature>
<feature type="disulfide bond" evidence="1">
    <location>
        <begin position="32"/>
        <end position="99"/>
    </location>
</feature>
<feature type="cross-link" description="6-(S-cysteinyl)-8alpha-(pros-histidyl)-FAD (His-Cys)" evidence="1">
    <location>
        <begin position="114"/>
        <end position="176"/>
    </location>
</feature>
<feature type="sequence conflict" description="In Ref. 3; AAK56258/AAM91446." evidence="9" ref="3">
    <original>P</original>
    <variation>L</variation>
    <location>
        <position position="126"/>
    </location>
</feature>
<keyword id="KW-0134">Cell wall</keyword>
<keyword id="KW-1015">Disulfide bond</keyword>
<keyword id="KW-0274">FAD</keyword>
<keyword id="KW-0285">Flavoprotein</keyword>
<keyword id="KW-0325">Glycoprotein</keyword>
<keyword id="KW-0547">Nucleotide-binding</keyword>
<keyword id="KW-0560">Oxidoreductase</keyword>
<keyword id="KW-1185">Reference proteome</keyword>
<keyword id="KW-0964">Secreted</keyword>
<keyword id="KW-0732">Signal</keyword>
<protein>
    <recommendedName>
        <fullName evidence="8">Berberine bridge enzyme-like 22</fullName>
        <shortName evidence="8">AtBBE-like 22</shortName>
        <ecNumber evidence="1">1.1.1.-</ecNumber>
    </recommendedName>
</protein>